<keyword id="KW-0002">3D-structure</keyword>
<keyword id="KW-1185">Reference proteome</keyword>
<keyword id="KW-0687">Ribonucleoprotein</keyword>
<keyword id="KW-0689">Ribosomal protein</keyword>
<keyword id="KW-0694">RNA-binding</keyword>
<keyword id="KW-0699">rRNA-binding</keyword>
<gene>
    <name evidence="2" type="primary">rpsC</name>
    <name type="ordered locus">MPN_171</name>
    <name type="ORF">MP660</name>
</gene>
<accession>P41205</accession>
<accession>P75574</accession>
<comment type="function">
    <text evidence="2">Binds the lower part of the 30S subunit head. Binds mRNA in the 70S ribosome, positioning it for translation.</text>
</comment>
<comment type="subunit">
    <text evidence="2">Part of the 30S ribosomal subunit. Forms a tight complex with proteins S10 and S14.</text>
</comment>
<comment type="similarity">
    <text evidence="2">Belongs to the universal ribosomal protein uS3 family.</text>
</comment>
<sequence>MGQKVNSNGLRFGINKNWISRWTANSHAQTAKWLIEDEKIRNLFFVNYRNAQVSNVEIERTQATVDVFVYAAQPAFLIGSENKNIQKITKQIKQIIGRTTNLDLTINEIGSPMLSARIIARDLANAIEARVPLRTAMRQSLIKVLKAGANGIKVLVSGRLNGAEIARDKMYIEGNMPLSTLRADIDYALEKAQTTYGVIGVKVWINRGMIYTKGLNRTPAHILHPQKKQPNRQNQQPRHFNQGQVLSANKLTGSDVETSSIQALTKPNKEDKQ</sequence>
<feature type="initiator methionine" description="Removed" evidence="1">
    <location>
        <position position="1"/>
    </location>
</feature>
<feature type="chain" id="PRO_0000130156" description="Small ribosomal subunit protein uS3">
    <location>
        <begin position="2"/>
        <end position="273"/>
    </location>
</feature>
<feature type="domain" description="KH type-2" evidence="2">
    <location>
        <begin position="40"/>
        <end position="110"/>
    </location>
</feature>
<feature type="region of interest" description="Disordered" evidence="3">
    <location>
        <begin position="244"/>
        <end position="273"/>
    </location>
</feature>
<feature type="compositionally biased region" description="Polar residues" evidence="3">
    <location>
        <begin position="244"/>
        <end position="265"/>
    </location>
</feature>
<feature type="helix" evidence="5">
    <location>
        <begin position="7"/>
        <end position="11"/>
    </location>
</feature>
<feature type="turn" evidence="5">
    <location>
        <begin position="12"/>
        <end position="14"/>
    </location>
</feature>
<feature type="strand" evidence="5">
    <location>
        <begin position="19"/>
        <end position="21"/>
    </location>
</feature>
<feature type="helix" evidence="5">
    <location>
        <begin position="27"/>
        <end position="46"/>
    </location>
</feature>
<feature type="helix" evidence="5">
    <location>
        <begin position="49"/>
        <end position="51"/>
    </location>
</feature>
<feature type="strand" evidence="5">
    <location>
        <begin position="53"/>
        <end position="61"/>
    </location>
</feature>
<feature type="strand" evidence="5">
    <location>
        <begin position="64"/>
        <end position="72"/>
    </location>
</feature>
<feature type="helix" evidence="5">
    <location>
        <begin position="75"/>
        <end position="78"/>
    </location>
</feature>
<feature type="turn" evidence="5">
    <location>
        <begin position="79"/>
        <end position="82"/>
    </location>
</feature>
<feature type="helix" evidence="5">
    <location>
        <begin position="84"/>
        <end position="96"/>
    </location>
</feature>
<feature type="strand" evidence="5">
    <location>
        <begin position="102"/>
        <end position="108"/>
    </location>
</feature>
<feature type="helix" evidence="5">
    <location>
        <begin position="112"/>
        <end position="114"/>
    </location>
</feature>
<feature type="helix" evidence="5">
    <location>
        <begin position="116"/>
        <end position="128"/>
    </location>
</feature>
<feature type="helix" evidence="5">
    <location>
        <begin position="133"/>
        <end position="146"/>
    </location>
</feature>
<feature type="strand" evidence="5">
    <location>
        <begin position="152"/>
        <end position="159"/>
    </location>
</feature>
<feature type="helix" evidence="5">
    <location>
        <begin position="160"/>
        <end position="162"/>
    </location>
</feature>
<feature type="strand" evidence="5">
    <location>
        <begin position="167"/>
        <end position="174"/>
    </location>
</feature>
<feature type="strand" evidence="5">
    <location>
        <begin position="181"/>
        <end position="194"/>
    </location>
</feature>
<feature type="strand" evidence="5">
    <location>
        <begin position="197"/>
        <end position="209"/>
    </location>
</feature>
<feature type="strand" evidence="5">
    <location>
        <begin position="220"/>
        <end position="222"/>
    </location>
</feature>
<name>RS3_MYCPN</name>
<reference key="1">
    <citation type="journal article" date="1996" name="Nucleic Acids Res.">
        <title>Complete sequence analysis of the genome of the bacterium Mycoplasma pneumoniae.</title>
        <authorList>
            <person name="Himmelreich R."/>
            <person name="Hilbert H."/>
            <person name="Plagens H."/>
            <person name="Pirkl E."/>
            <person name="Li B.-C."/>
            <person name="Herrmann R."/>
        </authorList>
    </citation>
    <scope>NUCLEOTIDE SEQUENCE [LARGE SCALE GENOMIC DNA]</scope>
    <source>
        <strain>ATCC 29342 / M129 / Subtype 1</strain>
    </source>
</reference>
<reference key="2">
    <citation type="submission" date="1992-08" db="EMBL/GenBank/DDBJ databases">
        <authorList>
            <person name="Wenzel R."/>
            <person name="Pirkl E."/>
            <person name="Herrmann R."/>
        </authorList>
    </citation>
    <scope>NUCLEOTIDE SEQUENCE [GENOMIC DNA] OF 131-236</scope>
    <source>
        <strain>ATCC 29342 / M129 / Subtype 1</strain>
    </source>
</reference>
<organism>
    <name type="scientific">Mycoplasma pneumoniae (strain ATCC 29342 / M129 / Subtype 1)</name>
    <name type="common">Mycoplasmoides pneumoniae</name>
    <dbReference type="NCBI Taxonomy" id="272634"/>
    <lineage>
        <taxon>Bacteria</taxon>
        <taxon>Bacillati</taxon>
        <taxon>Mycoplasmatota</taxon>
        <taxon>Mycoplasmoidales</taxon>
        <taxon>Mycoplasmoidaceae</taxon>
        <taxon>Mycoplasmoides</taxon>
    </lineage>
</organism>
<protein>
    <recommendedName>
        <fullName evidence="2">Small ribosomal subunit protein uS3</fullName>
    </recommendedName>
    <alternativeName>
        <fullName evidence="4">30S ribosomal protein S3</fullName>
    </alternativeName>
</protein>
<proteinExistence type="evidence at protein level"/>
<evidence type="ECO:0000250" key="1"/>
<evidence type="ECO:0000255" key="2">
    <source>
        <dbReference type="HAMAP-Rule" id="MF_01309"/>
    </source>
</evidence>
<evidence type="ECO:0000256" key="3">
    <source>
        <dbReference type="SAM" id="MobiDB-lite"/>
    </source>
</evidence>
<evidence type="ECO:0000305" key="4"/>
<evidence type="ECO:0007829" key="5">
    <source>
        <dbReference type="PDB" id="8P6P"/>
    </source>
</evidence>
<dbReference type="EMBL" id="U00089">
    <property type="protein sequence ID" value="AAB96308.1"/>
    <property type="molecule type" value="Genomic_DNA"/>
</dbReference>
<dbReference type="EMBL" id="X67652">
    <property type="protein sequence ID" value="CAA47894.1"/>
    <property type="molecule type" value="Genomic_DNA"/>
</dbReference>
<dbReference type="PIR" id="S73986">
    <property type="entry name" value="S73986"/>
</dbReference>
<dbReference type="RefSeq" id="NP_109859.1">
    <property type="nucleotide sequence ID" value="NC_000912.1"/>
</dbReference>
<dbReference type="RefSeq" id="WP_010874528.1">
    <property type="nucleotide sequence ID" value="NZ_OU342337.1"/>
</dbReference>
<dbReference type="PDB" id="7OOC">
    <property type="method" value="EM"/>
    <property type="resolution" value="3.70 A"/>
    <property type="chains" value="B=1-273"/>
</dbReference>
<dbReference type="PDB" id="7P6Z">
    <property type="method" value="EM"/>
    <property type="resolution" value="3.50 A"/>
    <property type="chains" value="B=1-273"/>
</dbReference>
<dbReference type="PDB" id="7PAH">
    <property type="method" value="EM"/>
    <property type="resolution" value="9.50 A"/>
    <property type="chains" value="B=1-273"/>
</dbReference>
<dbReference type="PDB" id="7PAI">
    <property type="method" value="EM"/>
    <property type="resolution" value="6.70 A"/>
    <property type="chains" value="B=1-273"/>
</dbReference>
<dbReference type="PDB" id="7PAJ">
    <property type="method" value="EM"/>
    <property type="resolution" value="7.30 A"/>
    <property type="chains" value="B=1-273"/>
</dbReference>
<dbReference type="PDB" id="7PAK">
    <property type="method" value="EM"/>
    <property type="resolution" value="5.30 A"/>
    <property type="chains" value="B=1-273"/>
</dbReference>
<dbReference type="PDB" id="7PAL">
    <property type="method" value="EM"/>
    <property type="resolution" value="4.70 A"/>
    <property type="chains" value="B=1-273"/>
</dbReference>
<dbReference type="PDB" id="7PAM">
    <property type="method" value="EM"/>
    <property type="resolution" value="6.80 A"/>
    <property type="chains" value="B=1-273"/>
</dbReference>
<dbReference type="PDB" id="7PAN">
    <property type="method" value="EM"/>
    <property type="resolution" value="9.70 A"/>
    <property type="chains" value="B=1-273"/>
</dbReference>
<dbReference type="PDB" id="7PAO">
    <property type="method" value="EM"/>
    <property type="resolution" value="7.00 A"/>
    <property type="chains" value="B=1-273"/>
</dbReference>
<dbReference type="PDB" id="7PAQ">
    <property type="method" value="EM"/>
    <property type="resolution" value="8.90 A"/>
    <property type="chains" value="B=1-273"/>
</dbReference>
<dbReference type="PDB" id="7PAR">
    <property type="method" value="EM"/>
    <property type="resolution" value="8.20 A"/>
    <property type="chains" value="B=1-273"/>
</dbReference>
<dbReference type="PDB" id="7PAS">
    <property type="method" value="EM"/>
    <property type="resolution" value="16.00 A"/>
    <property type="chains" value="B=1-273"/>
</dbReference>
<dbReference type="PDB" id="7PH9">
    <property type="method" value="EM"/>
    <property type="resolution" value="8.70 A"/>
    <property type="chains" value="B=1-273"/>
</dbReference>
<dbReference type="PDB" id="7PHA">
    <property type="method" value="EM"/>
    <property type="resolution" value="8.50 A"/>
    <property type="chains" value="B=1-273"/>
</dbReference>
<dbReference type="PDB" id="7PHB">
    <property type="method" value="EM"/>
    <property type="resolution" value="4.90 A"/>
    <property type="chains" value="B=1-273"/>
</dbReference>
<dbReference type="PDB" id="7PHC">
    <property type="method" value="EM"/>
    <property type="resolution" value="9.90 A"/>
    <property type="chains" value="B=1-273"/>
</dbReference>
<dbReference type="PDB" id="7PI8">
    <property type="method" value="EM"/>
    <property type="resolution" value="8.90 A"/>
    <property type="chains" value="B=1-273"/>
</dbReference>
<dbReference type="PDB" id="7PI9">
    <property type="method" value="EM"/>
    <property type="resolution" value="6.30 A"/>
    <property type="chains" value="B=1-273"/>
</dbReference>
<dbReference type="PDB" id="7PIA">
    <property type="method" value="EM"/>
    <property type="resolution" value="13.60 A"/>
    <property type="chains" value="B=1-273"/>
</dbReference>
<dbReference type="PDB" id="7PIB">
    <property type="method" value="EM"/>
    <property type="resolution" value="4.70 A"/>
    <property type="chains" value="B=1-273"/>
</dbReference>
<dbReference type="PDB" id="7PIC">
    <property type="method" value="EM"/>
    <property type="resolution" value="9.10 A"/>
    <property type="chains" value="B=1-273"/>
</dbReference>
<dbReference type="PDB" id="7PIO">
    <property type="method" value="EM"/>
    <property type="resolution" value="9.50 A"/>
    <property type="chains" value="B=1-273"/>
</dbReference>
<dbReference type="PDB" id="7PIP">
    <property type="method" value="EM"/>
    <property type="resolution" value="9.30 A"/>
    <property type="chains" value="B=1-273"/>
</dbReference>
<dbReference type="PDB" id="7PIQ">
    <property type="method" value="EM"/>
    <property type="resolution" value="9.70 A"/>
    <property type="chains" value="B=1-273"/>
</dbReference>
<dbReference type="PDB" id="7PIR">
    <property type="method" value="EM"/>
    <property type="resolution" value="12.10 A"/>
    <property type="chains" value="B=1-273"/>
</dbReference>
<dbReference type="PDB" id="7PIS">
    <property type="method" value="EM"/>
    <property type="resolution" value="15.00 A"/>
    <property type="chains" value="B=1-273"/>
</dbReference>
<dbReference type="PDB" id="7PIT">
    <property type="method" value="EM"/>
    <property type="resolution" value="5.70 A"/>
    <property type="chains" value="B=1-273"/>
</dbReference>
<dbReference type="PDB" id="8P6P">
    <property type="method" value="EM"/>
    <property type="resolution" value="3.20 A"/>
    <property type="chains" value="B=1-273"/>
</dbReference>
<dbReference type="PDB" id="8P7X">
    <property type="method" value="EM"/>
    <property type="resolution" value="3.03 A"/>
    <property type="chains" value="B=1-273"/>
</dbReference>
<dbReference type="PDB" id="8P7Y">
    <property type="method" value="EM"/>
    <property type="resolution" value="3.70 A"/>
    <property type="chains" value="B=1-273"/>
</dbReference>
<dbReference type="PDB" id="8P8V">
    <property type="method" value="EM"/>
    <property type="resolution" value="8.70 A"/>
    <property type="chains" value="B=1-273"/>
</dbReference>
<dbReference type="PDB" id="8P8W">
    <property type="method" value="EM"/>
    <property type="resolution" value="8.70 A"/>
    <property type="chains" value="B=1-273"/>
</dbReference>
<dbReference type="PDBsum" id="7OOC"/>
<dbReference type="PDBsum" id="7P6Z"/>
<dbReference type="PDBsum" id="7PAH"/>
<dbReference type="PDBsum" id="7PAI"/>
<dbReference type="PDBsum" id="7PAJ"/>
<dbReference type="PDBsum" id="7PAK"/>
<dbReference type="PDBsum" id="7PAL"/>
<dbReference type="PDBsum" id="7PAM"/>
<dbReference type="PDBsum" id="7PAN"/>
<dbReference type="PDBsum" id="7PAO"/>
<dbReference type="PDBsum" id="7PAQ"/>
<dbReference type="PDBsum" id="7PAR"/>
<dbReference type="PDBsum" id="7PAS"/>
<dbReference type="PDBsum" id="7PH9"/>
<dbReference type="PDBsum" id="7PHA"/>
<dbReference type="PDBsum" id="7PHB"/>
<dbReference type="PDBsum" id="7PHC"/>
<dbReference type="PDBsum" id="7PI8"/>
<dbReference type="PDBsum" id="7PI9"/>
<dbReference type="PDBsum" id="7PIA"/>
<dbReference type="PDBsum" id="7PIB"/>
<dbReference type="PDBsum" id="7PIC"/>
<dbReference type="PDBsum" id="7PIO"/>
<dbReference type="PDBsum" id="7PIP"/>
<dbReference type="PDBsum" id="7PIQ"/>
<dbReference type="PDBsum" id="7PIR"/>
<dbReference type="PDBsum" id="7PIS"/>
<dbReference type="PDBsum" id="7PIT"/>
<dbReference type="PDBsum" id="8P6P"/>
<dbReference type="PDBsum" id="8P7X"/>
<dbReference type="PDBsum" id="8P7Y"/>
<dbReference type="PDBsum" id="8P8V"/>
<dbReference type="PDBsum" id="8P8W"/>
<dbReference type="EMDB" id="EMD-13234"/>
<dbReference type="EMDB" id="EMD-13272"/>
<dbReference type="EMDB" id="EMD-13273"/>
<dbReference type="EMDB" id="EMD-13274"/>
<dbReference type="EMDB" id="EMD-13275"/>
<dbReference type="EMDB" id="EMD-13276"/>
<dbReference type="EMDB" id="EMD-13277"/>
<dbReference type="EMDB" id="EMD-13278"/>
<dbReference type="EMDB" id="EMD-13279"/>
<dbReference type="EMDB" id="EMD-13280"/>
<dbReference type="EMDB" id="EMD-13281"/>
<dbReference type="EMDB" id="EMD-13282"/>
<dbReference type="EMDB" id="EMD-13410"/>
<dbReference type="EMDB" id="EMD-13411"/>
<dbReference type="EMDB" id="EMD-13412"/>
<dbReference type="EMDB" id="EMD-13413"/>
<dbReference type="EMDB" id="EMD-13432"/>
<dbReference type="EMDB" id="EMD-13433"/>
<dbReference type="EMDB" id="EMD-13434"/>
<dbReference type="EMDB" id="EMD-13435"/>
<dbReference type="EMDB" id="EMD-13436"/>
<dbReference type="EMDB" id="EMD-13445"/>
<dbReference type="EMDB" id="EMD-13446"/>
<dbReference type="EMDB" id="EMD-13447"/>
<dbReference type="EMDB" id="EMD-13448"/>
<dbReference type="EMDB" id="EMD-13449"/>
<dbReference type="EMDB" id="EMD-13450"/>
<dbReference type="SMR" id="P41205"/>
<dbReference type="IntAct" id="P41205">
    <property type="interactions" value="12"/>
</dbReference>
<dbReference type="STRING" id="272634.MPN_171"/>
<dbReference type="EnsemblBacteria" id="AAB96308">
    <property type="protein sequence ID" value="AAB96308"/>
    <property type="gene ID" value="MPN_171"/>
</dbReference>
<dbReference type="GeneID" id="66609181"/>
<dbReference type="KEGG" id="mpn:MPN_171"/>
<dbReference type="PATRIC" id="fig|272634.6.peg.189"/>
<dbReference type="HOGENOM" id="CLU_058591_0_2_14"/>
<dbReference type="OrthoDB" id="9806396at2"/>
<dbReference type="BioCyc" id="MPNE272634:G1GJ3-281-MONOMER"/>
<dbReference type="Proteomes" id="UP000000808">
    <property type="component" value="Chromosome"/>
</dbReference>
<dbReference type="GO" id="GO:0022627">
    <property type="term" value="C:cytosolic small ribosomal subunit"/>
    <property type="evidence" value="ECO:0007669"/>
    <property type="project" value="TreeGrafter"/>
</dbReference>
<dbReference type="GO" id="GO:0003729">
    <property type="term" value="F:mRNA binding"/>
    <property type="evidence" value="ECO:0007669"/>
    <property type="project" value="UniProtKB-UniRule"/>
</dbReference>
<dbReference type="GO" id="GO:0019843">
    <property type="term" value="F:rRNA binding"/>
    <property type="evidence" value="ECO:0007669"/>
    <property type="project" value="UniProtKB-UniRule"/>
</dbReference>
<dbReference type="GO" id="GO:0003735">
    <property type="term" value="F:structural constituent of ribosome"/>
    <property type="evidence" value="ECO:0007669"/>
    <property type="project" value="InterPro"/>
</dbReference>
<dbReference type="GO" id="GO:0006412">
    <property type="term" value="P:translation"/>
    <property type="evidence" value="ECO:0007669"/>
    <property type="project" value="UniProtKB-UniRule"/>
</dbReference>
<dbReference type="CDD" id="cd02412">
    <property type="entry name" value="KH-II_30S_S3"/>
    <property type="match status" value="1"/>
</dbReference>
<dbReference type="FunFam" id="3.30.300.20:FF:000001">
    <property type="entry name" value="30S ribosomal protein S3"/>
    <property type="match status" value="1"/>
</dbReference>
<dbReference type="Gene3D" id="3.30.300.20">
    <property type="match status" value="1"/>
</dbReference>
<dbReference type="Gene3D" id="3.30.1140.32">
    <property type="entry name" value="Ribosomal protein S3, C-terminal domain"/>
    <property type="match status" value="1"/>
</dbReference>
<dbReference type="HAMAP" id="MF_01309_B">
    <property type="entry name" value="Ribosomal_uS3_B"/>
    <property type="match status" value="1"/>
</dbReference>
<dbReference type="InterPro" id="IPR004087">
    <property type="entry name" value="KH_dom"/>
</dbReference>
<dbReference type="InterPro" id="IPR015946">
    <property type="entry name" value="KH_dom-like_a/b"/>
</dbReference>
<dbReference type="InterPro" id="IPR004044">
    <property type="entry name" value="KH_dom_type_2"/>
</dbReference>
<dbReference type="InterPro" id="IPR009019">
    <property type="entry name" value="KH_sf_prok-type"/>
</dbReference>
<dbReference type="InterPro" id="IPR036419">
    <property type="entry name" value="Ribosomal_S3_C_sf"/>
</dbReference>
<dbReference type="InterPro" id="IPR005704">
    <property type="entry name" value="Ribosomal_uS3_bac-typ"/>
</dbReference>
<dbReference type="InterPro" id="IPR001351">
    <property type="entry name" value="Ribosomal_uS3_C"/>
</dbReference>
<dbReference type="InterPro" id="IPR018280">
    <property type="entry name" value="Ribosomal_uS3_CS"/>
</dbReference>
<dbReference type="NCBIfam" id="TIGR01009">
    <property type="entry name" value="rpsC_bact"/>
    <property type="match status" value="1"/>
</dbReference>
<dbReference type="PANTHER" id="PTHR11760">
    <property type="entry name" value="30S/40S RIBOSOMAL PROTEIN S3"/>
    <property type="match status" value="1"/>
</dbReference>
<dbReference type="PANTHER" id="PTHR11760:SF19">
    <property type="entry name" value="SMALL RIBOSOMAL SUBUNIT PROTEIN US3C"/>
    <property type="match status" value="1"/>
</dbReference>
<dbReference type="Pfam" id="PF07650">
    <property type="entry name" value="KH_2"/>
    <property type="match status" value="1"/>
</dbReference>
<dbReference type="Pfam" id="PF00189">
    <property type="entry name" value="Ribosomal_S3_C"/>
    <property type="match status" value="1"/>
</dbReference>
<dbReference type="SMART" id="SM00322">
    <property type="entry name" value="KH"/>
    <property type="match status" value="1"/>
</dbReference>
<dbReference type="SUPFAM" id="SSF54814">
    <property type="entry name" value="Prokaryotic type KH domain (KH-domain type II)"/>
    <property type="match status" value="1"/>
</dbReference>
<dbReference type="SUPFAM" id="SSF54821">
    <property type="entry name" value="Ribosomal protein S3 C-terminal domain"/>
    <property type="match status" value="1"/>
</dbReference>
<dbReference type="PROSITE" id="PS50823">
    <property type="entry name" value="KH_TYPE_2"/>
    <property type="match status" value="1"/>
</dbReference>
<dbReference type="PROSITE" id="PS00548">
    <property type="entry name" value="RIBOSOMAL_S3"/>
    <property type="match status" value="1"/>
</dbReference>